<comment type="function">
    <text evidence="1">Participates in the innate immune response to microbial agents. Acts via MYD88 and TRAF6, leading to NF-kappa-B activation, cytokine secretion and the inflammatory response (By similarity).</text>
</comment>
<comment type="subunit">
    <text evidence="1">Binds MYD88 via their respective TIR domains.</text>
</comment>
<comment type="subcellular location">
    <subcellularLocation>
        <location evidence="1">Membrane</location>
        <topology evidence="1">Single-pass type I membrane protein</topology>
    </subcellularLocation>
</comment>
<comment type="similarity">
    <text evidence="5">Belongs to the Toll-like receptor family.</text>
</comment>
<comment type="caution">
    <text evidence="2 5">In some plant proteins and in human SARM1, the TIR domain has NAD(+) hydrolase (NADase) activity (By similarity). However, despite the presence of the catalytic Asp residue, the isolated TIR domain of human TLR4 lacks NADase activity (By similarity). Based on this, it is unlikely that Toll-like receptors have NADase activity.</text>
</comment>
<gene>
    <name type="primary">TLR10</name>
</gene>
<sequence>MRYIRSIYIFCSIVTSVRSGASELPEERELTTNFSSMSLTKVPEGLTPITTTLDLSYNLLFQLQHSDFRSLSKLKVLILCHNRIQELDIKTFEFNKELSYLDVSNNRLKSVTWFSLAGLRHLDLSFNDFDTLPISVETGNMSHLETLGLSGAKIQKSDFQKIAHLQLNTVLLGLRTLSHYEEGSLPILNTTRLHIVLPVNTNFWVLLHDGIKTSKILEVINIDLQKSQFTSYESQQIPILENAKTSILLLNKVDLSWDDLFLIFQLVWHTSVEYFQIQHVTFGGKVYLDHNSFDYSNTVMRTIKLEHVHFRIFNIPQESIYLLFTKMDIENLTISDAQMPHMLFPMYPTRFQYLNFANNILTDDVFKKSIQLPHLKTLILKDNKLETLSLVSHFASNTSLRHLDLSENLLQHENDENCLWPETLVTMNLSFNKFADSVFGCLPRNIQILDLNSNKIQTVPKAITHLTSLRELNLAFNFLTDLPGCSHFRRLLVLNVEMNLILSSSLDFFQSCQEVKTLNAGRNPFRCTCELRDFIQLGKYSEGMMVGWSDSYICEYPLNLKGTQLKDVHLPEISCNTGLLIVTIVVVMLVLGMAVAFCCLHFDLPWYLRMLHQWTQTWLRVRKTTQEQLKRSVQFHVFISYSEHDSAWVKYELIPSLEKEDGSVLICLHEGNSDPGKSMTEDTINCIEKSYKSIFVLSPSFVQTEWCHYEPYFAHHNLFHESLDYIILILLEPIPLYCIPTRYPELKALMEKKAYLEWPKDRRKCGLFWANLRAALHVNLLDTRGTCELQTFTELNEGFGGSAISLIRTDCL</sequence>
<keyword id="KW-0325">Glycoprotein</keyword>
<keyword id="KW-0391">Immunity</keyword>
<keyword id="KW-0395">Inflammatory response</keyword>
<keyword id="KW-0399">Innate immunity</keyword>
<keyword id="KW-0433">Leucine-rich repeat</keyword>
<keyword id="KW-0472">Membrane</keyword>
<keyword id="KW-0520">NAD</keyword>
<keyword id="KW-0675">Receptor</keyword>
<keyword id="KW-1185">Reference proteome</keyword>
<keyword id="KW-0677">Repeat</keyword>
<keyword id="KW-0732">Signal</keyword>
<keyword id="KW-0812">Transmembrane</keyword>
<keyword id="KW-1133">Transmembrane helix</keyword>
<evidence type="ECO:0000250" key="1"/>
<evidence type="ECO:0000250" key="2">
    <source>
        <dbReference type="UniProtKB" id="O00206"/>
    </source>
</evidence>
<evidence type="ECO:0000255" key="3"/>
<evidence type="ECO:0000255" key="4">
    <source>
        <dbReference type="PROSITE-ProRule" id="PRU00204"/>
    </source>
</evidence>
<evidence type="ECO:0000305" key="5"/>
<name>TLR10_BOVIN</name>
<dbReference type="EMBL" id="AY634632">
    <property type="protein sequence ID" value="AAT48490.2"/>
    <property type="molecule type" value="mRNA"/>
</dbReference>
<dbReference type="EMBL" id="EU006655">
    <property type="protein sequence ID" value="ABU86944.1"/>
    <property type="molecule type" value="Genomic_DNA"/>
</dbReference>
<dbReference type="EMBL" id="EU006656">
    <property type="protein sequence ID" value="ABU86945.1"/>
    <property type="molecule type" value="Genomic_DNA"/>
</dbReference>
<dbReference type="EMBL" id="EU006657">
    <property type="protein sequence ID" value="ABU86946.1"/>
    <property type="molecule type" value="Genomic_DNA"/>
</dbReference>
<dbReference type="EMBL" id="BC123541">
    <property type="protein sequence ID" value="AAI23542.1"/>
    <property type="molecule type" value="mRNA"/>
</dbReference>
<dbReference type="RefSeq" id="NP_001070386.1">
    <property type="nucleotide sequence ID" value="NM_001076918.2"/>
</dbReference>
<dbReference type="RefSeq" id="XP_059743591.1">
    <property type="nucleotide sequence ID" value="XM_059887608.1"/>
</dbReference>
<dbReference type="RefSeq" id="XP_059743592.1">
    <property type="nucleotide sequence ID" value="XM_059887609.1"/>
</dbReference>
<dbReference type="SMR" id="Q6GV17"/>
<dbReference type="FunCoup" id="Q6GV17">
    <property type="interactions" value="32"/>
</dbReference>
<dbReference type="STRING" id="9913.ENSBTAP00000018658"/>
<dbReference type="GlyCosmos" id="Q6GV17">
    <property type="glycosylation" value="6 sites, No reported glycans"/>
</dbReference>
<dbReference type="GlyGen" id="Q6GV17">
    <property type="glycosylation" value="6 sites"/>
</dbReference>
<dbReference type="PaxDb" id="9913-ENSBTAP00000018658"/>
<dbReference type="Ensembl" id="ENSBTAT00000018658.6">
    <property type="protein sequence ID" value="ENSBTAP00000018658.4"/>
    <property type="gene ID" value="ENSBTAG00000014042.6"/>
</dbReference>
<dbReference type="Ensembl" id="ENSBTAT00000073994.2">
    <property type="protein sequence ID" value="ENSBTAP00000073760.2"/>
    <property type="gene ID" value="ENSBTAG00000014042.6"/>
</dbReference>
<dbReference type="GeneID" id="539791"/>
<dbReference type="KEGG" id="bta:539791"/>
<dbReference type="CTD" id="81793"/>
<dbReference type="VEuPathDB" id="HostDB:ENSBTAG00000014042"/>
<dbReference type="VGNC" id="VGNC:50019">
    <property type="gene designation" value="TLR10"/>
</dbReference>
<dbReference type="eggNOG" id="KOG4641">
    <property type="taxonomic scope" value="Eukaryota"/>
</dbReference>
<dbReference type="GeneTree" id="ENSGT00940000163662"/>
<dbReference type="HOGENOM" id="CLU_006000_3_0_1"/>
<dbReference type="InParanoid" id="Q6GV17"/>
<dbReference type="OMA" id="ICLYERY"/>
<dbReference type="OrthoDB" id="1081807at2759"/>
<dbReference type="TreeFam" id="TF351113"/>
<dbReference type="Reactome" id="R-BTA-168142">
    <property type="pathway name" value="Toll Like Receptor 10 (TLR10) Cascade"/>
</dbReference>
<dbReference type="Proteomes" id="UP000009136">
    <property type="component" value="Chromosome 6"/>
</dbReference>
<dbReference type="Bgee" id="ENSBTAG00000014042">
    <property type="expression patterns" value="Expressed in nasopharynx and 80 other cell types or tissues"/>
</dbReference>
<dbReference type="GO" id="GO:0005886">
    <property type="term" value="C:plasma membrane"/>
    <property type="evidence" value="ECO:0000318"/>
    <property type="project" value="GO_Central"/>
</dbReference>
<dbReference type="GO" id="GO:0043235">
    <property type="term" value="C:receptor complex"/>
    <property type="evidence" value="ECO:0007669"/>
    <property type="project" value="Ensembl"/>
</dbReference>
<dbReference type="GO" id="GO:0042802">
    <property type="term" value="F:identical protein binding"/>
    <property type="evidence" value="ECO:0007669"/>
    <property type="project" value="Ensembl"/>
</dbReference>
<dbReference type="GO" id="GO:0071723">
    <property type="term" value="F:lipopeptide binding"/>
    <property type="evidence" value="ECO:0000318"/>
    <property type="project" value="GO_Central"/>
</dbReference>
<dbReference type="GO" id="GO:0061809">
    <property type="term" value="F:NAD+ nucleosidase activity, cyclic ADP-ribose generating"/>
    <property type="evidence" value="ECO:0007669"/>
    <property type="project" value="UniProtKB-EC"/>
</dbReference>
<dbReference type="GO" id="GO:0038023">
    <property type="term" value="F:signaling receptor activity"/>
    <property type="evidence" value="ECO:0000318"/>
    <property type="project" value="GO_Central"/>
</dbReference>
<dbReference type="GO" id="GO:0035663">
    <property type="term" value="F:Toll-like receptor 2 binding"/>
    <property type="evidence" value="ECO:0000318"/>
    <property type="project" value="GO_Central"/>
</dbReference>
<dbReference type="GO" id="GO:0004888">
    <property type="term" value="F:transmembrane signaling receptor activity"/>
    <property type="evidence" value="ECO:0007669"/>
    <property type="project" value="InterPro"/>
</dbReference>
<dbReference type="GO" id="GO:0071221">
    <property type="term" value="P:cellular response to bacterial lipopeptide"/>
    <property type="evidence" value="ECO:0000318"/>
    <property type="project" value="GO_Central"/>
</dbReference>
<dbReference type="GO" id="GO:0006954">
    <property type="term" value="P:inflammatory response"/>
    <property type="evidence" value="ECO:0000318"/>
    <property type="project" value="GO_Central"/>
</dbReference>
<dbReference type="GO" id="GO:0045087">
    <property type="term" value="P:innate immune response"/>
    <property type="evidence" value="ECO:0007669"/>
    <property type="project" value="UniProtKB-KW"/>
</dbReference>
<dbReference type="GO" id="GO:0002224">
    <property type="term" value="P:toll-like receptor signaling pathway"/>
    <property type="evidence" value="ECO:0000318"/>
    <property type="project" value="GO_Central"/>
</dbReference>
<dbReference type="FunFam" id="3.40.50.10140:FF:000001">
    <property type="entry name" value="Toll-like receptor 2"/>
    <property type="match status" value="1"/>
</dbReference>
<dbReference type="FunFam" id="3.80.10.10:FF:000046">
    <property type="entry name" value="Toll-like receptor 2"/>
    <property type="match status" value="1"/>
</dbReference>
<dbReference type="Gene3D" id="3.80.10.10">
    <property type="entry name" value="Ribonuclease Inhibitor"/>
    <property type="match status" value="1"/>
</dbReference>
<dbReference type="Gene3D" id="3.40.50.10140">
    <property type="entry name" value="Toll/interleukin-1 receptor homology (TIR) domain"/>
    <property type="match status" value="1"/>
</dbReference>
<dbReference type="InterPro" id="IPR000483">
    <property type="entry name" value="Cys-rich_flank_reg_C"/>
</dbReference>
<dbReference type="InterPro" id="IPR001611">
    <property type="entry name" value="Leu-rich_rpt"/>
</dbReference>
<dbReference type="InterPro" id="IPR025875">
    <property type="entry name" value="Leu-rich_rpt_4"/>
</dbReference>
<dbReference type="InterPro" id="IPR003591">
    <property type="entry name" value="Leu-rich_rpt_typical-subtyp"/>
</dbReference>
<dbReference type="InterPro" id="IPR032675">
    <property type="entry name" value="LRR_dom_sf"/>
</dbReference>
<dbReference type="InterPro" id="IPR000157">
    <property type="entry name" value="TIR_dom"/>
</dbReference>
<dbReference type="InterPro" id="IPR017241">
    <property type="entry name" value="Toll-like_receptor"/>
</dbReference>
<dbReference type="InterPro" id="IPR035897">
    <property type="entry name" value="Toll_tir_struct_dom_sf"/>
</dbReference>
<dbReference type="PANTHER" id="PTHR24365">
    <property type="entry name" value="TOLL-LIKE RECEPTOR"/>
    <property type="match status" value="1"/>
</dbReference>
<dbReference type="PANTHER" id="PTHR24365:SF23">
    <property type="entry name" value="TOLL-LIKE RECEPTOR 10"/>
    <property type="match status" value="1"/>
</dbReference>
<dbReference type="Pfam" id="PF12799">
    <property type="entry name" value="LRR_4"/>
    <property type="match status" value="1"/>
</dbReference>
<dbReference type="Pfam" id="PF13855">
    <property type="entry name" value="LRR_8"/>
    <property type="match status" value="1"/>
</dbReference>
<dbReference type="Pfam" id="PF01582">
    <property type="entry name" value="TIR"/>
    <property type="match status" value="1"/>
</dbReference>
<dbReference type="PIRSF" id="PIRSF037595">
    <property type="entry name" value="Toll-like_receptor"/>
    <property type="match status" value="1"/>
</dbReference>
<dbReference type="SMART" id="SM00369">
    <property type="entry name" value="LRR_TYP"/>
    <property type="match status" value="6"/>
</dbReference>
<dbReference type="SMART" id="SM00082">
    <property type="entry name" value="LRRCT"/>
    <property type="match status" value="1"/>
</dbReference>
<dbReference type="SMART" id="SM00255">
    <property type="entry name" value="TIR"/>
    <property type="match status" value="1"/>
</dbReference>
<dbReference type="SUPFAM" id="SSF52058">
    <property type="entry name" value="L domain-like"/>
    <property type="match status" value="1"/>
</dbReference>
<dbReference type="SUPFAM" id="SSF52200">
    <property type="entry name" value="Toll/Interleukin receptor TIR domain"/>
    <property type="match status" value="1"/>
</dbReference>
<dbReference type="PROSITE" id="PS51450">
    <property type="entry name" value="LRR"/>
    <property type="match status" value="9"/>
</dbReference>
<dbReference type="PROSITE" id="PS50104">
    <property type="entry name" value="TIR"/>
    <property type="match status" value="1"/>
</dbReference>
<protein>
    <recommendedName>
        <fullName>Toll-like receptor 10</fullName>
    </recommendedName>
    <cdAntigenName>CD290</cdAntigenName>
</protein>
<feature type="signal peptide" evidence="3">
    <location>
        <begin position="1"/>
        <end position="19"/>
    </location>
</feature>
<feature type="chain" id="PRO_0000281927" description="Toll-like receptor 10">
    <location>
        <begin position="20"/>
        <end position="812"/>
    </location>
</feature>
<feature type="topological domain" description="Extracellular" evidence="3">
    <location>
        <begin position="20"/>
        <end position="577"/>
    </location>
</feature>
<feature type="transmembrane region" description="Helical" evidence="3">
    <location>
        <begin position="578"/>
        <end position="598"/>
    </location>
</feature>
<feature type="topological domain" description="Cytoplasmic" evidence="3">
    <location>
        <begin position="599"/>
        <end position="812"/>
    </location>
</feature>
<feature type="repeat" description="LRR 1">
    <location>
        <begin position="24"/>
        <end position="46"/>
    </location>
</feature>
<feature type="repeat" description="LRR 2">
    <location>
        <begin position="49"/>
        <end position="70"/>
    </location>
</feature>
<feature type="repeat" description="LRR 3">
    <location>
        <begin position="73"/>
        <end position="94"/>
    </location>
</feature>
<feature type="repeat" description="LRR 4">
    <location>
        <begin position="97"/>
        <end position="118"/>
    </location>
</feature>
<feature type="repeat" description="LRR 5">
    <location>
        <begin position="119"/>
        <end position="139"/>
    </location>
</feature>
<feature type="repeat" description="LRR 6">
    <location>
        <begin position="143"/>
        <end position="166"/>
    </location>
</feature>
<feature type="repeat" description="LRR 7">
    <location>
        <begin position="296"/>
        <end position="321"/>
    </location>
</feature>
<feature type="repeat" description="LRR 8">
    <location>
        <begin position="325"/>
        <end position="348"/>
    </location>
</feature>
<feature type="repeat" description="LRR 9">
    <location>
        <begin position="350"/>
        <end position="373"/>
    </location>
</feature>
<feature type="repeat" description="LRR 10">
    <location>
        <begin position="374"/>
        <end position="395"/>
    </location>
</feature>
<feature type="repeat" description="LRR 11">
    <location>
        <begin position="399"/>
        <end position="420"/>
    </location>
</feature>
<feature type="repeat" description="LRR 12">
    <location>
        <begin position="423"/>
        <end position="443"/>
    </location>
</feature>
<feature type="repeat" description="LRR 13">
    <location>
        <begin position="445"/>
        <end position="467"/>
    </location>
</feature>
<feature type="repeat" description="LRR 14">
    <location>
        <begin position="468"/>
        <end position="489"/>
    </location>
</feature>
<feature type="repeat" description="LRR 15">
    <location>
        <begin position="490"/>
        <end position="510"/>
    </location>
</feature>
<feature type="domain" description="LRRCT">
    <location>
        <begin position="523"/>
        <end position="577"/>
    </location>
</feature>
<feature type="domain" description="TIR" evidence="4">
    <location>
        <begin position="633"/>
        <end position="776"/>
    </location>
</feature>
<feature type="glycosylation site" description="N-linked (GlcNAc...) asparagine" evidence="3">
    <location>
        <position position="33"/>
    </location>
</feature>
<feature type="glycosylation site" description="N-linked (GlcNAc...) asparagine" evidence="3">
    <location>
        <position position="140"/>
    </location>
</feature>
<feature type="glycosylation site" description="N-linked (GlcNAc...) asparagine" evidence="3">
    <location>
        <position position="189"/>
    </location>
</feature>
<feature type="glycosylation site" description="N-linked (GlcNAc...) asparagine" evidence="3">
    <location>
        <position position="331"/>
    </location>
</feature>
<feature type="glycosylation site" description="N-linked (GlcNAc...) asparagine" evidence="3">
    <location>
        <position position="397"/>
    </location>
</feature>
<feature type="glycosylation site" description="N-linked (GlcNAc...) asparagine" evidence="3">
    <location>
        <position position="428"/>
    </location>
</feature>
<proteinExistence type="evidence at transcript level"/>
<reference key="1">
    <citation type="journal article" date="2006" name="Vet. Immunol. Immunopathol.">
        <title>Expression of TOLL-like receptors (TLR) by bovine antigen-presenting cells-potential role in pathogen discrimination?</title>
        <authorList>
            <person name="Werling D."/>
            <person name="Piercy J."/>
            <person name="Coffey T.J."/>
        </authorList>
    </citation>
    <scope>NUCLEOTIDE SEQUENCE [MRNA]</scope>
</reference>
<reference key="2">
    <citation type="journal article" date="2007" name="Genomics">
        <title>Sequence variability and protein domain architectures for bovine Toll-like receptors 1, 5, and 10.</title>
        <authorList>
            <person name="Seabury C.M."/>
            <person name="Cargill E.J."/>
            <person name="Womack J.E."/>
        </authorList>
    </citation>
    <scope>NUCLEOTIDE SEQUENCE [GENOMIC DNA]</scope>
</reference>
<reference key="3">
    <citation type="submission" date="2006-09" db="EMBL/GenBank/DDBJ databases">
        <authorList>
            <consortium name="NIH - Mammalian Gene Collection (MGC) project"/>
        </authorList>
    </citation>
    <scope>NUCLEOTIDE SEQUENCE [LARGE SCALE MRNA]</scope>
    <source>
        <strain>Hereford</strain>
        <tissue>Fetal pons</tissue>
    </source>
</reference>
<accession>Q6GV17</accession>
<accession>A7YK74</accession>
<organism>
    <name type="scientific">Bos taurus</name>
    <name type="common">Bovine</name>
    <dbReference type="NCBI Taxonomy" id="9913"/>
    <lineage>
        <taxon>Eukaryota</taxon>
        <taxon>Metazoa</taxon>
        <taxon>Chordata</taxon>
        <taxon>Craniata</taxon>
        <taxon>Vertebrata</taxon>
        <taxon>Euteleostomi</taxon>
        <taxon>Mammalia</taxon>
        <taxon>Eutheria</taxon>
        <taxon>Laurasiatheria</taxon>
        <taxon>Artiodactyla</taxon>
        <taxon>Ruminantia</taxon>
        <taxon>Pecora</taxon>
        <taxon>Bovidae</taxon>
        <taxon>Bovinae</taxon>
        <taxon>Bos</taxon>
    </lineage>
</organism>